<organism>
    <name type="scientific">Glycine max</name>
    <name type="common">Soybean</name>
    <name type="synonym">Glycine hispida</name>
    <dbReference type="NCBI Taxonomy" id="3847"/>
    <lineage>
        <taxon>Eukaryota</taxon>
        <taxon>Viridiplantae</taxon>
        <taxon>Streptophyta</taxon>
        <taxon>Embryophyta</taxon>
        <taxon>Tracheophyta</taxon>
        <taxon>Spermatophyta</taxon>
        <taxon>Magnoliopsida</taxon>
        <taxon>eudicotyledons</taxon>
        <taxon>Gunneridae</taxon>
        <taxon>Pentapetalae</taxon>
        <taxon>rosids</taxon>
        <taxon>fabids</taxon>
        <taxon>Fabales</taxon>
        <taxon>Fabaceae</taxon>
        <taxon>Papilionoideae</taxon>
        <taxon>50 kb inversion clade</taxon>
        <taxon>NPAAA clade</taxon>
        <taxon>indigoferoid/millettioid clade</taxon>
        <taxon>Phaseoleae</taxon>
        <taxon>Glycine</taxon>
        <taxon>Glycine subgen. Soja</taxon>
    </lineage>
</organism>
<accession>Q8LJS2</accession>
<comment type="function">
    <text evidence="1">Mediates the deacetylation of lysine residues on the N-terminal part of the core histones (H2A, H2B, H3 and H4). Histone deacetylation gives a tag for epigenetic repression and plays an important role in transcriptional regulation, cell cycle progression and developmental events (By similarity).</text>
</comment>
<comment type="subcellular location">
    <subcellularLocation>
        <location evidence="1">Nucleus</location>
        <location evidence="1">Nucleolus</location>
    </subcellularLocation>
</comment>
<comment type="similarity">
    <text evidence="4">Belongs to the histone deacetylase HD2 family.</text>
</comment>
<gene>
    <name type="primary">HDT1</name>
    <name type="synonym">HD2A</name>
</gene>
<sequence>MEFWGVEVKVGQTVTVDPMDPVDSYIHISQVALGEAKKDKPNEPVVLYLKVGEQKIVLGTLSRDGIPHLSLDLVLDSDSELSHTSKSASVFFCGYKVLTGNDNASDFSDSSEEDEELALEGQDNGKPELKAEGAKVTKPSKSIPKIGAPAKAADPKKDEDDDSDDESDDDLAGEDESGSSDEMDDDSNSEEESDGDDEETPAKKVDQGKKRPNESAAKTPISAKKAKTATPEKTDGKKSVHVATPHPSKKGGKTPNSTKGQTPNSAGQLSCASCKKSFTNEAGLQQHKKAKHGGQ</sequence>
<feature type="chain" id="PRO_0000195212" description="Histone deacetylase HDT1">
    <location>
        <begin position="1"/>
        <end position="295"/>
    </location>
</feature>
<feature type="zinc finger region" description="C2H2-type" evidence="2">
    <location>
        <begin position="269"/>
        <end position="292"/>
    </location>
</feature>
<feature type="region of interest" description="Disordered" evidence="3">
    <location>
        <begin position="105"/>
        <end position="271"/>
    </location>
</feature>
<feature type="compositionally biased region" description="Acidic residues" evidence="3">
    <location>
        <begin position="109"/>
        <end position="118"/>
    </location>
</feature>
<feature type="compositionally biased region" description="Basic and acidic residues" evidence="3">
    <location>
        <begin position="123"/>
        <end position="135"/>
    </location>
</feature>
<feature type="compositionally biased region" description="Acidic residues" evidence="3">
    <location>
        <begin position="159"/>
        <end position="199"/>
    </location>
</feature>
<feature type="compositionally biased region" description="Basic and acidic residues" evidence="3">
    <location>
        <begin position="200"/>
        <end position="213"/>
    </location>
</feature>
<feature type="compositionally biased region" description="Polar residues" evidence="3">
    <location>
        <begin position="254"/>
        <end position="271"/>
    </location>
</feature>
<name>HDT1_SOYBN</name>
<reference key="1">
    <citation type="submission" date="2002-07" db="EMBL/GenBank/DDBJ databases">
        <title>Nucleotide sequence of a cDNA encoding soybean nucleolar histone deacetylase HD2-p39.</title>
        <authorList>
            <person name="Tang T.J."/>
            <person name="Wang C.S."/>
        </authorList>
    </citation>
    <scope>NUCLEOTIDE SEQUENCE [MRNA]</scope>
    <source>
        <tissue>Seed coat</tissue>
    </source>
</reference>
<evidence type="ECO:0000250" key="1"/>
<evidence type="ECO:0000255" key="2">
    <source>
        <dbReference type="PROSITE-ProRule" id="PRU00042"/>
    </source>
</evidence>
<evidence type="ECO:0000256" key="3">
    <source>
        <dbReference type="SAM" id="MobiDB-lite"/>
    </source>
</evidence>
<evidence type="ECO:0000305" key="4"/>
<protein>
    <recommendedName>
        <fullName>Histone deacetylase HDT1</fullName>
    </recommendedName>
    <alternativeName>
        <fullName>Histone deacetylase 2a</fullName>
        <shortName>HD2a</shortName>
    </alternativeName>
    <alternativeName>
        <fullName>Nucleolar histone deacetylase HD2-p39</fullName>
    </alternativeName>
</protein>
<keyword id="KW-0156">Chromatin regulator</keyword>
<keyword id="KW-0378">Hydrolase</keyword>
<keyword id="KW-0479">Metal-binding</keyword>
<keyword id="KW-0539">Nucleus</keyword>
<keyword id="KW-0597">Phosphoprotein</keyword>
<keyword id="KW-1185">Reference proteome</keyword>
<keyword id="KW-0678">Repressor</keyword>
<keyword id="KW-0804">Transcription</keyword>
<keyword id="KW-0805">Transcription regulation</keyword>
<keyword id="KW-0862">Zinc</keyword>
<keyword id="KW-0863">Zinc-finger</keyword>
<proteinExistence type="evidence at transcript level"/>
<dbReference type="EMBL" id="AF532618">
    <property type="protein sequence ID" value="AAN03465.1"/>
    <property type="molecule type" value="mRNA"/>
</dbReference>
<dbReference type="RefSeq" id="NP_001235884.1">
    <property type="nucleotide sequence ID" value="NM_001248955.1"/>
</dbReference>
<dbReference type="SMR" id="Q8LJS2"/>
<dbReference type="FunCoup" id="Q8LJS2">
    <property type="interactions" value="3713"/>
</dbReference>
<dbReference type="STRING" id="3847.Q8LJS2"/>
<dbReference type="PaxDb" id="3847-GLYMA12G09000.1"/>
<dbReference type="GeneID" id="547649"/>
<dbReference type="KEGG" id="gmx:547649"/>
<dbReference type="eggNOG" id="ENOG502QVH6">
    <property type="taxonomic scope" value="Eukaryota"/>
</dbReference>
<dbReference type="InParanoid" id="Q8LJS2"/>
<dbReference type="OrthoDB" id="2019803at2759"/>
<dbReference type="Proteomes" id="UP000008827">
    <property type="component" value="Unplaced"/>
</dbReference>
<dbReference type="GO" id="GO:0005730">
    <property type="term" value="C:nucleolus"/>
    <property type="evidence" value="ECO:0007669"/>
    <property type="project" value="UniProtKB-SubCell"/>
</dbReference>
<dbReference type="GO" id="GO:0016787">
    <property type="term" value="F:hydrolase activity"/>
    <property type="evidence" value="ECO:0007669"/>
    <property type="project" value="UniProtKB-KW"/>
</dbReference>
<dbReference type="GO" id="GO:0008270">
    <property type="term" value="F:zinc ion binding"/>
    <property type="evidence" value="ECO:0007669"/>
    <property type="project" value="UniProtKB-KW"/>
</dbReference>
<dbReference type="GO" id="GO:0006325">
    <property type="term" value="P:chromatin organization"/>
    <property type="evidence" value="ECO:0007669"/>
    <property type="project" value="UniProtKB-KW"/>
</dbReference>
<dbReference type="FunFam" id="2.60.120.340:FF:000004">
    <property type="entry name" value="Histone deacetylase HDT1"/>
    <property type="match status" value="1"/>
</dbReference>
<dbReference type="Gene3D" id="2.60.120.340">
    <property type="entry name" value="Nucleoplasmin core domain"/>
    <property type="match status" value="1"/>
</dbReference>
<dbReference type="InterPro" id="IPR041232">
    <property type="entry name" value="NPL"/>
</dbReference>
<dbReference type="InterPro" id="IPR013087">
    <property type="entry name" value="Znf_C2H2_type"/>
</dbReference>
<dbReference type="Pfam" id="PF17800">
    <property type="entry name" value="NPL"/>
    <property type="match status" value="1"/>
</dbReference>
<dbReference type="PROSITE" id="PS00028">
    <property type="entry name" value="ZINC_FINGER_C2H2_1"/>
    <property type="match status" value="1"/>
</dbReference>
<dbReference type="PROSITE" id="PS50157">
    <property type="entry name" value="ZINC_FINGER_C2H2_2"/>
    <property type="match status" value="1"/>
</dbReference>